<sequence>MIKQRTLKRIVQATGVGLHTGKKVTLTLRPAPANTGVIYRRTDLNPPVDFPADAKSVRDTMLCTCLVNEHDVRISTVEHLNAALAGLGIDNIVIEVNAPEIPIMDGSAAPFVYLLLDAGIDELNCAKKFVRIKETVRVEDGDKWAEFRPYNGFTLDFTIDFNHPAIDSSSQRYAMNFSADAFMRQISRARTFGFMRDIEYLQSRGLCLGGSFDCAIVVDDYRVLNEDGLRFEDEFVRHKMLDAIGDLFMCGHNIIGAFTAYKSGHALNNKLLQAVLAKQEAWEFVTFQDDAELPLAFKAPSTVLA</sequence>
<name>LPXC_SALG2</name>
<gene>
    <name evidence="1" type="primary">lpxC</name>
    <name type="ordered locus">SG0135</name>
</gene>
<proteinExistence type="inferred from homology"/>
<protein>
    <recommendedName>
        <fullName evidence="1">UDP-3-O-acyl-N-acetylglucosamine deacetylase</fullName>
        <shortName evidence="1">UDP-3-O-acyl-GlcNAc deacetylase</shortName>
        <ecNumber evidence="1">3.5.1.108</ecNumber>
    </recommendedName>
    <alternativeName>
        <fullName evidence="1">UDP-3-O-[R-3-hydroxymyristoyl]-N-acetylglucosamine deacetylase</fullName>
    </alternativeName>
</protein>
<evidence type="ECO:0000255" key="1">
    <source>
        <dbReference type="HAMAP-Rule" id="MF_00388"/>
    </source>
</evidence>
<organism>
    <name type="scientific">Salmonella gallinarum (strain 287/91 / NCTC 13346)</name>
    <dbReference type="NCBI Taxonomy" id="550538"/>
    <lineage>
        <taxon>Bacteria</taxon>
        <taxon>Pseudomonadati</taxon>
        <taxon>Pseudomonadota</taxon>
        <taxon>Gammaproteobacteria</taxon>
        <taxon>Enterobacterales</taxon>
        <taxon>Enterobacteriaceae</taxon>
        <taxon>Salmonella</taxon>
    </lineage>
</organism>
<comment type="function">
    <text evidence="1">Catalyzes the hydrolysis of UDP-3-O-myristoyl-N-acetylglucosamine to form UDP-3-O-myristoylglucosamine and acetate, the committed step in lipid A biosynthesis.</text>
</comment>
<comment type="catalytic activity">
    <reaction evidence="1">
        <text>a UDP-3-O-[(3R)-3-hydroxyacyl]-N-acetyl-alpha-D-glucosamine + H2O = a UDP-3-O-[(3R)-3-hydroxyacyl]-alpha-D-glucosamine + acetate</text>
        <dbReference type="Rhea" id="RHEA:67816"/>
        <dbReference type="ChEBI" id="CHEBI:15377"/>
        <dbReference type="ChEBI" id="CHEBI:30089"/>
        <dbReference type="ChEBI" id="CHEBI:137740"/>
        <dbReference type="ChEBI" id="CHEBI:173225"/>
        <dbReference type="EC" id="3.5.1.108"/>
    </reaction>
</comment>
<comment type="cofactor">
    <cofactor evidence="1">
        <name>Zn(2+)</name>
        <dbReference type="ChEBI" id="CHEBI:29105"/>
    </cofactor>
</comment>
<comment type="pathway">
    <text evidence="1">Glycolipid biosynthesis; lipid IV(A) biosynthesis; lipid IV(A) from (3R)-3-hydroxytetradecanoyl-[acyl-carrier-protein] and UDP-N-acetyl-alpha-D-glucosamine: step 2/6.</text>
</comment>
<comment type="similarity">
    <text evidence="1">Belongs to the LpxC family.</text>
</comment>
<reference key="1">
    <citation type="journal article" date="2008" name="Genome Res.">
        <title>Comparative genome analysis of Salmonella enteritidis PT4 and Salmonella gallinarum 287/91 provides insights into evolutionary and host adaptation pathways.</title>
        <authorList>
            <person name="Thomson N.R."/>
            <person name="Clayton D.J."/>
            <person name="Windhorst D."/>
            <person name="Vernikos G."/>
            <person name="Davidson S."/>
            <person name="Churcher C."/>
            <person name="Quail M.A."/>
            <person name="Stevens M."/>
            <person name="Jones M.A."/>
            <person name="Watson M."/>
            <person name="Barron A."/>
            <person name="Layton A."/>
            <person name="Pickard D."/>
            <person name="Kingsley R.A."/>
            <person name="Bignell A."/>
            <person name="Clark L."/>
            <person name="Harris B."/>
            <person name="Ormond D."/>
            <person name="Abdellah Z."/>
            <person name="Brooks K."/>
            <person name="Cherevach I."/>
            <person name="Chillingworth T."/>
            <person name="Woodward J."/>
            <person name="Norberczak H."/>
            <person name="Lord A."/>
            <person name="Arrowsmith C."/>
            <person name="Jagels K."/>
            <person name="Moule S."/>
            <person name="Mungall K."/>
            <person name="Saunders M."/>
            <person name="Whitehead S."/>
            <person name="Chabalgoity J.A."/>
            <person name="Maskell D."/>
            <person name="Humphreys T."/>
            <person name="Roberts M."/>
            <person name="Barrow P.A."/>
            <person name="Dougan G."/>
            <person name="Parkhill J."/>
        </authorList>
    </citation>
    <scope>NUCLEOTIDE SEQUENCE [LARGE SCALE GENOMIC DNA]</scope>
    <source>
        <strain>287/91 / NCTC 13346</strain>
    </source>
</reference>
<feature type="chain" id="PRO_1000122816" description="UDP-3-O-acyl-N-acetylglucosamine deacetylase">
    <location>
        <begin position="1"/>
        <end position="305"/>
    </location>
</feature>
<feature type="active site" description="Proton donor" evidence="1">
    <location>
        <position position="265"/>
    </location>
</feature>
<feature type="binding site" evidence="1">
    <location>
        <position position="79"/>
    </location>
    <ligand>
        <name>Zn(2+)</name>
        <dbReference type="ChEBI" id="CHEBI:29105"/>
    </ligand>
</feature>
<feature type="binding site" evidence="1">
    <location>
        <position position="238"/>
    </location>
    <ligand>
        <name>Zn(2+)</name>
        <dbReference type="ChEBI" id="CHEBI:29105"/>
    </ligand>
</feature>
<feature type="binding site" evidence="1">
    <location>
        <position position="242"/>
    </location>
    <ligand>
        <name>Zn(2+)</name>
        <dbReference type="ChEBI" id="CHEBI:29105"/>
    </ligand>
</feature>
<accession>B5RH70</accession>
<dbReference type="EC" id="3.5.1.108" evidence="1"/>
<dbReference type="EMBL" id="AM933173">
    <property type="protein sequence ID" value="CAR36042.1"/>
    <property type="molecule type" value="Genomic_DNA"/>
</dbReference>
<dbReference type="RefSeq" id="WP_000595487.1">
    <property type="nucleotide sequence ID" value="NC_011274.1"/>
</dbReference>
<dbReference type="SMR" id="B5RH70"/>
<dbReference type="KEGG" id="seg:SG0135"/>
<dbReference type="HOGENOM" id="CLU_046528_1_0_6"/>
<dbReference type="UniPathway" id="UPA00359">
    <property type="reaction ID" value="UER00478"/>
</dbReference>
<dbReference type="Proteomes" id="UP000008321">
    <property type="component" value="Chromosome"/>
</dbReference>
<dbReference type="GO" id="GO:0016020">
    <property type="term" value="C:membrane"/>
    <property type="evidence" value="ECO:0007669"/>
    <property type="project" value="GOC"/>
</dbReference>
<dbReference type="GO" id="GO:0046872">
    <property type="term" value="F:metal ion binding"/>
    <property type="evidence" value="ECO:0007669"/>
    <property type="project" value="UniProtKB-KW"/>
</dbReference>
<dbReference type="GO" id="GO:0103117">
    <property type="term" value="F:UDP-3-O-acyl-N-acetylglucosamine deacetylase activity"/>
    <property type="evidence" value="ECO:0007669"/>
    <property type="project" value="UniProtKB-UniRule"/>
</dbReference>
<dbReference type="GO" id="GO:0009245">
    <property type="term" value="P:lipid A biosynthetic process"/>
    <property type="evidence" value="ECO:0007669"/>
    <property type="project" value="UniProtKB-UniRule"/>
</dbReference>
<dbReference type="FunFam" id="3.30.1700.10:FF:000001">
    <property type="entry name" value="UDP-3-O-acyl-N-acetylglucosamine deacetylase"/>
    <property type="match status" value="1"/>
</dbReference>
<dbReference type="FunFam" id="3.30.230.20:FF:000001">
    <property type="entry name" value="UDP-3-O-acyl-N-acetylglucosamine deacetylase"/>
    <property type="match status" value="1"/>
</dbReference>
<dbReference type="Gene3D" id="3.30.230.20">
    <property type="entry name" value="lpxc deacetylase, domain 1"/>
    <property type="match status" value="1"/>
</dbReference>
<dbReference type="Gene3D" id="3.30.1700.10">
    <property type="entry name" value="lpxc deacetylase, domain 2"/>
    <property type="match status" value="1"/>
</dbReference>
<dbReference type="HAMAP" id="MF_00388">
    <property type="entry name" value="LpxC"/>
    <property type="match status" value="1"/>
</dbReference>
<dbReference type="InterPro" id="IPR020568">
    <property type="entry name" value="Ribosomal_Su5_D2-typ_SF"/>
</dbReference>
<dbReference type="InterPro" id="IPR004463">
    <property type="entry name" value="UDP-acyl_GlcNac_deAcase"/>
</dbReference>
<dbReference type="InterPro" id="IPR011334">
    <property type="entry name" value="UDP-acyl_GlcNac_deAcase_C"/>
</dbReference>
<dbReference type="InterPro" id="IPR015870">
    <property type="entry name" value="UDP-acyl_N-AcGlcN_deAcase_N"/>
</dbReference>
<dbReference type="NCBIfam" id="TIGR00325">
    <property type="entry name" value="lpxC"/>
    <property type="match status" value="1"/>
</dbReference>
<dbReference type="PANTHER" id="PTHR33694">
    <property type="entry name" value="UDP-3-O-ACYL-N-ACETYLGLUCOSAMINE DEACETYLASE 1, MITOCHONDRIAL-RELATED"/>
    <property type="match status" value="1"/>
</dbReference>
<dbReference type="PANTHER" id="PTHR33694:SF1">
    <property type="entry name" value="UDP-3-O-ACYL-N-ACETYLGLUCOSAMINE DEACETYLASE 1, MITOCHONDRIAL-RELATED"/>
    <property type="match status" value="1"/>
</dbReference>
<dbReference type="Pfam" id="PF03331">
    <property type="entry name" value="LpxC"/>
    <property type="match status" value="1"/>
</dbReference>
<dbReference type="SUPFAM" id="SSF54211">
    <property type="entry name" value="Ribosomal protein S5 domain 2-like"/>
    <property type="match status" value="2"/>
</dbReference>
<keyword id="KW-0378">Hydrolase</keyword>
<keyword id="KW-0441">Lipid A biosynthesis</keyword>
<keyword id="KW-0444">Lipid biosynthesis</keyword>
<keyword id="KW-0443">Lipid metabolism</keyword>
<keyword id="KW-0479">Metal-binding</keyword>
<keyword id="KW-0862">Zinc</keyword>